<evidence type="ECO:0000255" key="1">
    <source>
        <dbReference type="HAMAP-Rule" id="MF_01310"/>
    </source>
</evidence>
<evidence type="ECO:0000305" key="2"/>
<sequence>MAKTVKKSGPKKAKRNVPNGVAHIQSTFNNTIVSITDTAGEVISWSSAGASGFKGARKGTPFAAQTAAEAAARRALDQGMRQIEVLVRGPGSGRETAIRALQVAGLEITLIRDVTPLPHNGCRRPKRRRV</sequence>
<reference key="1">
    <citation type="submission" date="2005-07" db="EMBL/GenBank/DDBJ databases">
        <title>Complete sequence of Synechococcus sp. CC9605.</title>
        <authorList>
            <consortium name="US DOE Joint Genome Institute"/>
            <person name="Copeland A."/>
            <person name="Lucas S."/>
            <person name="Lapidus A."/>
            <person name="Barry K."/>
            <person name="Detter J.C."/>
            <person name="Glavina T."/>
            <person name="Hammon N."/>
            <person name="Israni S."/>
            <person name="Pitluck S."/>
            <person name="Schmutz J."/>
            <person name="Martinez M."/>
            <person name="Larimer F."/>
            <person name="Land M."/>
            <person name="Kyrpides N."/>
            <person name="Ivanova N."/>
            <person name="Richardson P."/>
        </authorList>
    </citation>
    <scope>NUCLEOTIDE SEQUENCE [LARGE SCALE GENOMIC DNA]</scope>
    <source>
        <strain>CC9605</strain>
    </source>
</reference>
<keyword id="KW-0687">Ribonucleoprotein</keyword>
<keyword id="KW-0689">Ribosomal protein</keyword>
<keyword id="KW-0694">RNA-binding</keyword>
<keyword id="KW-0699">rRNA-binding</keyword>
<gene>
    <name evidence="1" type="primary">rpsK</name>
    <name evidence="1" type="synonym">rps11</name>
    <name type="ordered locus">Syncc9605_0354</name>
</gene>
<accession>Q3AMQ2</accession>
<organism>
    <name type="scientific">Synechococcus sp. (strain CC9605)</name>
    <dbReference type="NCBI Taxonomy" id="110662"/>
    <lineage>
        <taxon>Bacteria</taxon>
        <taxon>Bacillati</taxon>
        <taxon>Cyanobacteriota</taxon>
        <taxon>Cyanophyceae</taxon>
        <taxon>Synechococcales</taxon>
        <taxon>Synechococcaceae</taxon>
        <taxon>Synechococcus</taxon>
    </lineage>
</organism>
<proteinExistence type="inferred from homology"/>
<protein>
    <recommendedName>
        <fullName evidence="1">Small ribosomal subunit protein uS11</fullName>
    </recommendedName>
    <alternativeName>
        <fullName evidence="2">30S ribosomal protein S11</fullName>
    </alternativeName>
</protein>
<comment type="function">
    <text evidence="1">Located on the platform of the 30S subunit, it bridges several disparate RNA helices of the 16S rRNA. Forms part of the Shine-Dalgarno cleft in the 70S ribosome.</text>
</comment>
<comment type="subunit">
    <text evidence="1">Part of the 30S ribosomal subunit. Interacts with proteins S7 and S18. Binds to IF-3.</text>
</comment>
<comment type="similarity">
    <text evidence="1">Belongs to the universal ribosomal protein uS11 family.</text>
</comment>
<feature type="chain" id="PRO_0000294874" description="Small ribosomal subunit protein uS11">
    <location>
        <begin position="1"/>
        <end position="130"/>
    </location>
</feature>
<name>RS11_SYNSC</name>
<dbReference type="EMBL" id="CP000110">
    <property type="protein sequence ID" value="ABB34130.1"/>
    <property type="molecule type" value="Genomic_DNA"/>
</dbReference>
<dbReference type="RefSeq" id="WP_006850182.1">
    <property type="nucleotide sequence ID" value="NC_007516.1"/>
</dbReference>
<dbReference type="SMR" id="Q3AMQ2"/>
<dbReference type="STRING" id="110662.Syncc9605_0354"/>
<dbReference type="KEGG" id="syd:Syncc9605_0354"/>
<dbReference type="eggNOG" id="COG0100">
    <property type="taxonomic scope" value="Bacteria"/>
</dbReference>
<dbReference type="HOGENOM" id="CLU_072439_5_0_3"/>
<dbReference type="OrthoDB" id="9806415at2"/>
<dbReference type="GO" id="GO:1990904">
    <property type="term" value="C:ribonucleoprotein complex"/>
    <property type="evidence" value="ECO:0007669"/>
    <property type="project" value="UniProtKB-KW"/>
</dbReference>
<dbReference type="GO" id="GO:0005840">
    <property type="term" value="C:ribosome"/>
    <property type="evidence" value="ECO:0007669"/>
    <property type="project" value="UniProtKB-KW"/>
</dbReference>
<dbReference type="GO" id="GO:0019843">
    <property type="term" value="F:rRNA binding"/>
    <property type="evidence" value="ECO:0007669"/>
    <property type="project" value="UniProtKB-UniRule"/>
</dbReference>
<dbReference type="GO" id="GO:0003735">
    <property type="term" value="F:structural constituent of ribosome"/>
    <property type="evidence" value="ECO:0007669"/>
    <property type="project" value="InterPro"/>
</dbReference>
<dbReference type="GO" id="GO:0006412">
    <property type="term" value="P:translation"/>
    <property type="evidence" value="ECO:0007669"/>
    <property type="project" value="UniProtKB-UniRule"/>
</dbReference>
<dbReference type="FunFam" id="3.30.420.80:FF:000001">
    <property type="entry name" value="30S ribosomal protein S11"/>
    <property type="match status" value="1"/>
</dbReference>
<dbReference type="Gene3D" id="3.30.420.80">
    <property type="entry name" value="Ribosomal protein S11"/>
    <property type="match status" value="1"/>
</dbReference>
<dbReference type="HAMAP" id="MF_01310">
    <property type="entry name" value="Ribosomal_uS11"/>
    <property type="match status" value="1"/>
</dbReference>
<dbReference type="InterPro" id="IPR001971">
    <property type="entry name" value="Ribosomal_uS11"/>
</dbReference>
<dbReference type="InterPro" id="IPR019981">
    <property type="entry name" value="Ribosomal_uS11_bac-type"/>
</dbReference>
<dbReference type="InterPro" id="IPR018102">
    <property type="entry name" value="Ribosomal_uS11_CS"/>
</dbReference>
<dbReference type="InterPro" id="IPR036967">
    <property type="entry name" value="Ribosomal_uS11_sf"/>
</dbReference>
<dbReference type="NCBIfam" id="NF003698">
    <property type="entry name" value="PRK05309.1"/>
    <property type="match status" value="1"/>
</dbReference>
<dbReference type="NCBIfam" id="TIGR03632">
    <property type="entry name" value="uS11_bact"/>
    <property type="match status" value="1"/>
</dbReference>
<dbReference type="PANTHER" id="PTHR11759">
    <property type="entry name" value="40S RIBOSOMAL PROTEIN S14/30S RIBOSOMAL PROTEIN S11"/>
    <property type="match status" value="1"/>
</dbReference>
<dbReference type="Pfam" id="PF00411">
    <property type="entry name" value="Ribosomal_S11"/>
    <property type="match status" value="1"/>
</dbReference>
<dbReference type="PIRSF" id="PIRSF002131">
    <property type="entry name" value="Ribosomal_S11"/>
    <property type="match status" value="1"/>
</dbReference>
<dbReference type="SUPFAM" id="SSF53137">
    <property type="entry name" value="Translational machinery components"/>
    <property type="match status" value="1"/>
</dbReference>
<dbReference type="PROSITE" id="PS00054">
    <property type="entry name" value="RIBOSOMAL_S11"/>
    <property type="match status" value="1"/>
</dbReference>